<protein>
    <recommendedName>
        <fullName evidence="2">Protein YfiS</fullName>
    </recommendedName>
</protein>
<sequence>MEVGKLGKPYPLLNLAYVGV</sequence>
<evidence type="ECO:0000269" key="1">
    <source>
    </source>
</evidence>
<evidence type="ECO:0000303" key="2">
    <source>
    </source>
</evidence>
<evidence type="ECO:0000312" key="3">
    <source>
        <dbReference type="EMBL" id="QNV50536.1"/>
    </source>
</evidence>
<comment type="induction">
    <text evidence="1">Expressed equally in exponential and stationary phase in rich medium (at protein level).</text>
</comment>
<proteinExistence type="evidence at protein level"/>
<feature type="chain" id="PRO_0000447147" description="Protein YfiS">
    <location>
        <begin position="1"/>
        <end position="20"/>
    </location>
</feature>
<organism>
    <name type="scientific">Escherichia coli (strain K12)</name>
    <dbReference type="NCBI Taxonomy" id="83333"/>
    <lineage>
        <taxon>Bacteria</taxon>
        <taxon>Pseudomonadati</taxon>
        <taxon>Pseudomonadota</taxon>
        <taxon>Gammaproteobacteria</taxon>
        <taxon>Enterobacterales</taxon>
        <taxon>Enterobacteriaceae</taxon>
        <taxon>Escherichia</taxon>
    </lineage>
</organism>
<name>YFIS_ECOLI</name>
<keyword id="KW-1185">Reference proteome</keyword>
<dbReference type="EMBL" id="U00096">
    <property type="protein sequence ID" value="QNV50536.1"/>
    <property type="molecule type" value="Genomic_DNA"/>
</dbReference>
<dbReference type="InParanoid" id="P0DSG1"/>
<dbReference type="BioCyc" id="EcoCyc:MONOMER0-4495"/>
<dbReference type="Proteomes" id="UP000000625">
    <property type="component" value="Chromosome"/>
</dbReference>
<gene>
    <name evidence="2" type="primary">yfiS</name>
    <name evidence="3" type="ordered locus">b4783</name>
</gene>
<reference key="1">
    <citation type="journal article" date="1997" name="Science">
        <title>The complete genome sequence of Escherichia coli K-12.</title>
        <authorList>
            <person name="Blattner F.R."/>
            <person name="Plunkett G. III"/>
            <person name="Bloch C.A."/>
            <person name="Perna N.T."/>
            <person name="Burland V."/>
            <person name="Riley M."/>
            <person name="Collado-Vides J."/>
            <person name="Glasner J.D."/>
            <person name="Rode C.K."/>
            <person name="Mayhew G.F."/>
            <person name="Gregor J."/>
            <person name="Davis N.W."/>
            <person name="Kirkpatrick H.A."/>
            <person name="Goeden M.A."/>
            <person name="Rose D.J."/>
            <person name="Mau B."/>
            <person name="Shao Y."/>
        </authorList>
    </citation>
    <scope>NUCLEOTIDE SEQUENCE [LARGE SCALE GENOMIC DNA]</scope>
    <source>
        <strain>K12 / MG1655 / ATCC 47076</strain>
    </source>
</reference>
<reference key="2">
    <citation type="journal article" date="2019" name="MBio">
        <title>Identifying small proteins by ribosome profiling with stalled initiation complexes.</title>
        <authorList>
            <person name="Weaver J."/>
            <person name="Mohammad F."/>
            <person name="Buskirk A.R."/>
            <person name="Storz G."/>
        </authorList>
    </citation>
    <scope>IDENTIFICATION</scope>
    <scope>INDUCTION</scope>
    <source>
        <strain>K12 / MG1655 / ATCC 47076</strain>
    </source>
</reference>
<accession>P0DSG1</accession>
<accession>A0A7H2C789</accession>